<accession>Q839G4</accession>
<dbReference type="EMBL" id="AE016830">
    <property type="protein sequence ID" value="AAO80075.1"/>
    <property type="molecule type" value="Genomic_DNA"/>
</dbReference>
<dbReference type="RefSeq" id="NP_814004.1">
    <property type="nucleotide sequence ID" value="NC_004668.1"/>
</dbReference>
<dbReference type="RefSeq" id="WP_002356199.1">
    <property type="nucleotide sequence ID" value="NZ_KE136524.1"/>
</dbReference>
<dbReference type="PDB" id="6WU9">
    <property type="method" value="EM"/>
    <property type="resolution" value="2.90 A"/>
    <property type="chains" value="D=2-208"/>
</dbReference>
<dbReference type="PDB" id="7P7Q">
    <property type="method" value="EM"/>
    <property type="resolution" value="2.40 A"/>
    <property type="chains" value="H=1-209"/>
</dbReference>
<dbReference type="PDB" id="7P7R">
    <property type="method" value="EM"/>
    <property type="resolution" value="2.90 A"/>
    <property type="chains" value="H=1-209"/>
</dbReference>
<dbReference type="PDBsum" id="6WU9"/>
<dbReference type="PDBsum" id="7P7Q"/>
<dbReference type="PDBsum" id="7P7R"/>
<dbReference type="EMDB" id="EMD-13241"/>
<dbReference type="EMDB" id="EMD-13242"/>
<dbReference type="SMR" id="Q839G4"/>
<dbReference type="STRING" id="226185.EF_0206"/>
<dbReference type="EnsemblBacteria" id="AAO80075">
    <property type="protein sequence ID" value="AAO80075"/>
    <property type="gene ID" value="EF_0206"/>
</dbReference>
<dbReference type="GeneID" id="60892701"/>
<dbReference type="KEGG" id="efa:EF0206"/>
<dbReference type="PATRIC" id="fig|226185.45.peg.60"/>
<dbReference type="eggNOG" id="COG0087">
    <property type="taxonomic scope" value="Bacteria"/>
</dbReference>
<dbReference type="HOGENOM" id="CLU_044142_4_1_9"/>
<dbReference type="Proteomes" id="UP000001415">
    <property type="component" value="Chromosome"/>
</dbReference>
<dbReference type="GO" id="GO:0022625">
    <property type="term" value="C:cytosolic large ribosomal subunit"/>
    <property type="evidence" value="ECO:0007669"/>
    <property type="project" value="TreeGrafter"/>
</dbReference>
<dbReference type="GO" id="GO:0019843">
    <property type="term" value="F:rRNA binding"/>
    <property type="evidence" value="ECO:0007669"/>
    <property type="project" value="UniProtKB-UniRule"/>
</dbReference>
<dbReference type="GO" id="GO:0003735">
    <property type="term" value="F:structural constituent of ribosome"/>
    <property type="evidence" value="ECO:0007669"/>
    <property type="project" value="InterPro"/>
</dbReference>
<dbReference type="GO" id="GO:0006412">
    <property type="term" value="P:translation"/>
    <property type="evidence" value="ECO:0007669"/>
    <property type="project" value="UniProtKB-UniRule"/>
</dbReference>
<dbReference type="FunFam" id="2.40.30.10:FF:000004">
    <property type="entry name" value="50S ribosomal protein L3"/>
    <property type="match status" value="1"/>
</dbReference>
<dbReference type="FunFam" id="3.30.160.810:FF:000002">
    <property type="entry name" value="50S ribosomal protein L3"/>
    <property type="match status" value="1"/>
</dbReference>
<dbReference type="Gene3D" id="3.30.160.810">
    <property type="match status" value="1"/>
</dbReference>
<dbReference type="Gene3D" id="2.40.30.10">
    <property type="entry name" value="Translation factors"/>
    <property type="match status" value="1"/>
</dbReference>
<dbReference type="HAMAP" id="MF_01325_B">
    <property type="entry name" value="Ribosomal_uL3_B"/>
    <property type="match status" value="1"/>
</dbReference>
<dbReference type="InterPro" id="IPR000597">
    <property type="entry name" value="Ribosomal_uL3"/>
</dbReference>
<dbReference type="InterPro" id="IPR019927">
    <property type="entry name" value="Ribosomal_uL3_bac/org-type"/>
</dbReference>
<dbReference type="InterPro" id="IPR019926">
    <property type="entry name" value="Ribosomal_uL3_CS"/>
</dbReference>
<dbReference type="InterPro" id="IPR009000">
    <property type="entry name" value="Transl_B-barrel_sf"/>
</dbReference>
<dbReference type="NCBIfam" id="TIGR03625">
    <property type="entry name" value="L3_bact"/>
    <property type="match status" value="1"/>
</dbReference>
<dbReference type="PANTHER" id="PTHR11229">
    <property type="entry name" value="50S RIBOSOMAL PROTEIN L3"/>
    <property type="match status" value="1"/>
</dbReference>
<dbReference type="PANTHER" id="PTHR11229:SF16">
    <property type="entry name" value="LARGE RIBOSOMAL SUBUNIT PROTEIN UL3C"/>
    <property type="match status" value="1"/>
</dbReference>
<dbReference type="Pfam" id="PF00297">
    <property type="entry name" value="Ribosomal_L3"/>
    <property type="match status" value="1"/>
</dbReference>
<dbReference type="SUPFAM" id="SSF50447">
    <property type="entry name" value="Translation proteins"/>
    <property type="match status" value="1"/>
</dbReference>
<dbReference type="PROSITE" id="PS00474">
    <property type="entry name" value="RIBOSOMAL_L3"/>
    <property type="match status" value="1"/>
</dbReference>
<sequence length="209" mass="22717">MTKGILGKKVGMTQIFTESGELIPVTVVEATPNVVLQVKTVETDGYEAIQVGYQDKREVLSNKPAKGHVAKANTAPKRFIKEFKNVELGEYEVGKEIKVDVFQAGDVVDVTGTTKGKGFQGAIKRHGQSRGPMSHGSRYHRRPGSMGPVAPNRVFKNKRLAGRMGGDRVTIQNLEVVKVDVERNVILIKGNIPGAKKSLITIKSAVKAK</sequence>
<protein>
    <recommendedName>
        <fullName evidence="1">Large ribosomal subunit protein uL3</fullName>
    </recommendedName>
    <alternativeName>
        <fullName evidence="3">50S ribosomal protein L3</fullName>
    </alternativeName>
</protein>
<comment type="function">
    <text evidence="1">One of the primary rRNA binding proteins, it binds directly near the 3'-end of the 23S rRNA, where it nucleates assembly of the 50S subunit.</text>
</comment>
<comment type="subunit">
    <text evidence="1">Part of the 50S ribosomal subunit. Forms a cluster with proteins L14 and L19.</text>
</comment>
<comment type="similarity">
    <text evidence="1">Belongs to the universal ribosomal protein uL3 family.</text>
</comment>
<organism>
    <name type="scientific">Enterococcus faecalis (strain ATCC 700802 / V583)</name>
    <dbReference type="NCBI Taxonomy" id="226185"/>
    <lineage>
        <taxon>Bacteria</taxon>
        <taxon>Bacillati</taxon>
        <taxon>Bacillota</taxon>
        <taxon>Bacilli</taxon>
        <taxon>Lactobacillales</taxon>
        <taxon>Enterococcaceae</taxon>
        <taxon>Enterococcus</taxon>
    </lineage>
</organism>
<feature type="chain" id="PRO_0000077101" description="Large ribosomal subunit protein uL3">
    <location>
        <begin position="1"/>
        <end position="209"/>
    </location>
</feature>
<feature type="region of interest" description="Disordered" evidence="2">
    <location>
        <begin position="118"/>
        <end position="151"/>
    </location>
</feature>
<feature type="strand" evidence="4">
    <location>
        <begin position="4"/>
        <end position="16"/>
    </location>
</feature>
<feature type="strand" evidence="4">
    <location>
        <begin position="22"/>
        <end position="29"/>
    </location>
</feature>
<feature type="strand" evidence="4">
    <location>
        <begin position="33"/>
        <end position="39"/>
    </location>
</feature>
<feature type="turn" evidence="4">
    <location>
        <begin position="41"/>
        <end position="44"/>
    </location>
</feature>
<feature type="strand" evidence="4">
    <location>
        <begin position="48"/>
        <end position="55"/>
    </location>
</feature>
<feature type="strand" evidence="4">
    <location>
        <begin position="58"/>
        <end position="61"/>
    </location>
</feature>
<feature type="helix" evidence="4">
    <location>
        <begin position="63"/>
        <end position="70"/>
    </location>
</feature>
<feature type="turn" evidence="4">
    <location>
        <begin position="71"/>
        <end position="73"/>
    </location>
</feature>
<feature type="strand" evidence="4">
    <location>
        <begin position="77"/>
        <end position="85"/>
    </location>
</feature>
<feature type="strand" evidence="4">
    <location>
        <begin position="88"/>
        <end position="90"/>
    </location>
</feature>
<feature type="helix" evidence="4">
    <location>
        <begin position="99"/>
        <end position="101"/>
    </location>
</feature>
<feature type="strand" evidence="4">
    <location>
        <begin position="104"/>
        <end position="113"/>
    </location>
</feature>
<feature type="strand" evidence="4">
    <location>
        <begin position="116"/>
        <end position="120"/>
    </location>
</feature>
<feature type="helix" evidence="4">
    <location>
        <begin position="122"/>
        <end position="126"/>
    </location>
</feature>
<feature type="strand" evidence="4">
    <location>
        <begin position="162"/>
        <end position="165"/>
    </location>
</feature>
<feature type="strand" evidence="4">
    <location>
        <begin position="168"/>
        <end position="180"/>
    </location>
</feature>
<feature type="turn" evidence="4">
    <location>
        <begin position="181"/>
        <end position="184"/>
    </location>
</feature>
<feature type="strand" evidence="4">
    <location>
        <begin position="185"/>
        <end position="190"/>
    </location>
</feature>
<feature type="strand" evidence="4">
    <location>
        <begin position="199"/>
        <end position="204"/>
    </location>
</feature>
<gene>
    <name evidence="1" type="primary">rplC</name>
    <name type="ordered locus">EF_0206</name>
</gene>
<name>RL3_ENTFA</name>
<keyword id="KW-0002">3D-structure</keyword>
<keyword id="KW-1185">Reference proteome</keyword>
<keyword id="KW-0687">Ribonucleoprotein</keyword>
<keyword id="KW-0689">Ribosomal protein</keyword>
<keyword id="KW-0694">RNA-binding</keyword>
<keyword id="KW-0699">rRNA-binding</keyword>
<reference key="1">
    <citation type="journal article" date="2003" name="Science">
        <title>Role of mobile DNA in the evolution of vancomycin-resistant Enterococcus faecalis.</title>
        <authorList>
            <person name="Paulsen I.T."/>
            <person name="Banerjei L."/>
            <person name="Myers G.S.A."/>
            <person name="Nelson K.E."/>
            <person name="Seshadri R."/>
            <person name="Read T.D."/>
            <person name="Fouts D.E."/>
            <person name="Eisen J.A."/>
            <person name="Gill S.R."/>
            <person name="Heidelberg J.F."/>
            <person name="Tettelin H."/>
            <person name="Dodson R.J."/>
            <person name="Umayam L.A."/>
            <person name="Brinkac L.M."/>
            <person name="Beanan M.J."/>
            <person name="Daugherty S.C."/>
            <person name="DeBoy R.T."/>
            <person name="Durkin S.A."/>
            <person name="Kolonay J.F."/>
            <person name="Madupu R."/>
            <person name="Nelson W.C."/>
            <person name="Vamathevan J.J."/>
            <person name="Tran B."/>
            <person name="Upton J."/>
            <person name="Hansen T."/>
            <person name="Shetty J."/>
            <person name="Khouri H.M."/>
            <person name="Utterback T.R."/>
            <person name="Radune D."/>
            <person name="Ketchum K.A."/>
            <person name="Dougherty B.A."/>
            <person name="Fraser C.M."/>
        </authorList>
    </citation>
    <scope>NUCLEOTIDE SEQUENCE [LARGE SCALE GENOMIC DNA]</scope>
    <source>
        <strain>ATCC 700802 / V583</strain>
    </source>
</reference>
<proteinExistence type="evidence at protein level"/>
<evidence type="ECO:0000255" key="1">
    <source>
        <dbReference type="HAMAP-Rule" id="MF_01325"/>
    </source>
</evidence>
<evidence type="ECO:0000256" key="2">
    <source>
        <dbReference type="SAM" id="MobiDB-lite"/>
    </source>
</evidence>
<evidence type="ECO:0000305" key="3"/>
<evidence type="ECO:0007829" key="4">
    <source>
        <dbReference type="PDB" id="6WU9"/>
    </source>
</evidence>